<evidence type="ECO:0000255" key="1">
    <source>
        <dbReference type="HAMAP-Rule" id="MF_00300"/>
    </source>
</evidence>
<proteinExistence type="inferred from homology"/>
<name>AROC_BARHE</name>
<gene>
    <name evidence="1" type="primary">aroC</name>
    <name type="ordered locus">BH04320</name>
</gene>
<keyword id="KW-0028">Amino-acid biosynthesis</keyword>
<keyword id="KW-0057">Aromatic amino acid biosynthesis</keyword>
<keyword id="KW-0274">FAD</keyword>
<keyword id="KW-0285">Flavoprotein</keyword>
<keyword id="KW-0288">FMN</keyword>
<keyword id="KW-0456">Lyase</keyword>
<keyword id="KW-0521">NADP</keyword>
<comment type="function">
    <text evidence="1">Catalyzes the anti-1,4-elimination of the C-3 phosphate and the C-6 proR hydrogen from 5-enolpyruvylshikimate-3-phosphate (EPSP) to yield chorismate, which is the branch point compound that serves as the starting substrate for the three terminal pathways of aromatic amino acid biosynthesis. This reaction introduces a second double bond into the aromatic ring system.</text>
</comment>
<comment type="catalytic activity">
    <reaction evidence="1">
        <text>5-O-(1-carboxyvinyl)-3-phosphoshikimate = chorismate + phosphate</text>
        <dbReference type="Rhea" id="RHEA:21020"/>
        <dbReference type="ChEBI" id="CHEBI:29748"/>
        <dbReference type="ChEBI" id="CHEBI:43474"/>
        <dbReference type="ChEBI" id="CHEBI:57701"/>
        <dbReference type="EC" id="4.2.3.5"/>
    </reaction>
</comment>
<comment type="cofactor">
    <cofactor evidence="1">
        <name>FMNH2</name>
        <dbReference type="ChEBI" id="CHEBI:57618"/>
    </cofactor>
    <text evidence="1">Reduced FMN (FMNH(2)).</text>
</comment>
<comment type="pathway">
    <text evidence="1">Metabolic intermediate biosynthesis; chorismate biosynthesis; chorismate from D-erythrose 4-phosphate and phosphoenolpyruvate: step 7/7.</text>
</comment>
<comment type="subunit">
    <text evidence="1">Homotetramer.</text>
</comment>
<comment type="similarity">
    <text evidence="1">Belongs to the chorismate synthase family.</text>
</comment>
<feature type="chain" id="PRO_0000140555" description="Chorismate synthase">
    <location>
        <begin position="1"/>
        <end position="366"/>
    </location>
</feature>
<feature type="binding site" evidence="1">
    <location>
        <position position="48"/>
    </location>
    <ligand>
        <name>NADP(+)</name>
        <dbReference type="ChEBI" id="CHEBI:58349"/>
    </ligand>
</feature>
<feature type="binding site" evidence="1">
    <location>
        <begin position="131"/>
        <end position="133"/>
    </location>
    <ligand>
        <name>FMN</name>
        <dbReference type="ChEBI" id="CHEBI:58210"/>
    </ligand>
</feature>
<feature type="binding site" evidence="1">
    <location>
        <begin position="243"/>
        <end position="244"/>
    </location>
    <ligand>
        <name>FMN</name>
        <dbReference type="ChEBI" id="CHEBI:58210"/>
    </ligand>
</feature>
<feature type="binding site" evidence="1">
    <location>
        <position position="288"/>
    </location>
    <ligand>
        <name>FMN</name>
        <dbReference type="ChEBI" id="CHEBI:58210"/>
    </ligand>
</feature>
<feature type="binding site" evidence="1">
    <location>
        <begin position="303"/>
        <end position="307"/>
    </location>
    <ligand>
        <name>FMN</name>
        <dbReference type="ChEBI" id="CHEBI:58210"/>
    </ligand>
</feature>
<feature type="binding site" evidence="1">
    <location>
        <position position="329"/>
    </location>
    <ligand>
        <name>FMN</name>
        <dbReference type="ChEBI" id="CHEBI:58210"/>
    </ligand>
</feature>
<reference key="1">
    <citation type="journal article" date="2004" name="Proc. Natl. Acad. Sci. U.S.A.">
        <title>The louse-borne human pathogen Bartonella quintana is a genomic derivative of the zoonotic agent Bartonella henselae.</title>
        <authorList>
            <person name="Alsmark U.C.M."/>
            <person name="Frank A.C."/>
            <person name="Karlberg E.O."/>
            <person name="Legault B.-A."/>
            <person name="Ardell D.H."/>
            <person name="Canbaeck B."/>
            <person name="Eriksson A.-S."/>
            <person name="Naeslund A.K."/>
            <person name="Handley S.A."/>
            <person name="Huvet M."/>
            <person name="La Scola B."/>
            <person name="Holmberg M."/>
            <person name="Andersson S.G.E."/>
        </authorList>
    </citation>
    <scope>NUCLEOTIDE SEQUENCE [LARGE SCALE GENOMIC DNA]</scope>
    <source>
        <strain>ATCC 49882 / DSM 28221 / CCUG 30454 / Houston 1</strain>
    </source>
</reference>
<protein>
    <recommendedName>
        <fullName evidence="1">Chorismate synthase</fullName>
        <shortName evidence="1">CS</shortName>
        <ecNumber evidence="1">4.2.3.5</ecNumber>
    </recommendedName>
    <alternativeName>
        <fullName evidence="1">5-enolpyruvylshikimate-3-phosphate phospholyase</fullName>
    </alternativeName>
</protein>
<sequence length="366" mass="39494">MSHNTFGHLFRVTTWGESHGEALGCVIDGCPPGITFTLSDIQSYLNKRKPGQSKYTTQRRELDQVEILSGVIVQDDGITFVTTGTPISLLIRNMDQRSKDYSAIVHQYRPGHADYTYDVKYGIRDFRGGGRASARETAARVAAGAVARKIIPGVIVRGAVIAIGPHTINRNRWNWSEVDNNPFFTPDAEMVQVFSDYIDKVHKNGSSVGAVVEIVAENIPAGLGAPIYAKLDQDIASLLMSINAVKGVEIGDGFAAARLTGEENADEMRMGSDGKPLFLSNHAGGIVGGISSGQPIIARFAVKPTSSILIPRRSIDVDGNDVNVITKGRHDPCVGIRAVPVGEAMVACALADHYLRHRGQVGCFKR</sequence>
<dbReference type="EC" id="4.2.3.5" evidence="1"/>
<dbReference type="EMBL" id="BX897699">
    <property type="protein sequence ID" value="CAF27241.1"/>
    <property type="molecule type" value="Genomic_DNA"/>
</dbReference>
<dbReference type="RefSeq" id="WP_011180365.1">
    <property type="nucleotide sequence ID" value="NZ_LRIJ02000001.1"/>
</dbReference>
<dbReference type="SMR" id="Q6G4D4"/>
<dbReference type="PaxDb" id="283166-BH04320"/>
<dbReference type="EnsemblBacteria" id="CAF27241">
    <property type="protein sequence ID" value="CAF27241"/>
    <property type="gene ID" value="BH04320"/>
</dbReference>
<dbReference type="GeneID" id="92985090"/>
<dbReference type="KEGG" id="bhe:BH04320"/>
<dbReference type="eggNOG" id="COG0082">
    <property type="taxonomic scope" value="Bacteria"/>
</dbReference>
<dbReference type="OrthoDB" id="9771806at2"/>
<dbReference type="UniPathway" id="UPA00053">
    <property type="reaction ID" value="UER00090"/>
</dbReference>
<dbReference type="Proteomes" id="UP000000421">
    <property type="component" value="Chromosome"/>
</dbReference>
<dbReference type="GO" id="GO:0005829">
    <property type="term" value="C:cytosol"/>
    <property type="evidence" value="ECO:0007669"/>
    <property type="project" value="TreeGrafter"/>
</dbReference>
<dbReference type="GO" id="GO:0004107">
    <property type="term" value="F:chorismate synthase activity"/>
    <property type="evidence" value="ECO:0007669"/>
    <property type="project" value="UniProtKB-UniRule"/>
</dbReference>
<dbReference type="GO" id="GO:0010181">
    <property type="term" value="F:FMN binding"/>
    <property type="evidence" value="ECO:0007669"/>
    <property type="project" value="TreeGrafter"/>
</dbReference>
<dbReference type="GO" id="GO:0008652">
    <property type="term" value="P:amino acid biosynthetic process"/>
    <property type="evidence" value="ECO:0007669"/>
    <property type="project" value="UniProtKB-KW"/>
</dbReference>
<dbReference type="GO" id="GO:0009073">
    <property type="term" value="P:aromatic amino acid family biosynthetic process"/>
    <property type="evidence" value="ECO:0007669"/>
    <property type="project" value="UniProtKB-KW"/>
</dbReference>
<dbReference type="GO" id="GO:0009423">
    <property type="term" value="P:chorismate biosynthetic process"/>
    <property type="evidence" value="ECO:0007669"/>
    <property type="project" value="UniProtKB-UniRule"/>
</dbReference>
<dbReference type="CDD" id="cd07304">
    <property type="entry name" value="Chorismate_synthase"/>
    <property type="match status" value="1"/>
</dbReference>
<dbReference type="Gene3D" id="3.60.150.10">
    <property type="entry name" value="Chorismate synthase AroC"/>
    <property type="match status" value="1"/>
</dbReference>
<dbReference type="HAMAP" id="MF_00300">
    <property type="entry name" value="Chorismate_synth"/>
    <property type="match status" value="1"/>
</dbReference>
<dbReference type="InterPro" id="IPR000453">
    <property type="entry name" value="Chorismate_synth"/>
</dbReference>
<dbReference type="InterPro" id="IPR035904">
    <property type="entry name" value="Chorismate_synth_AroC_sf"/>
</dbReference>
<dbReference type="InterPro" id="IPR020541">
    <property type="entry name" value="Chorismate_synthase_CS"/>
</dbReference>
<dbReference type="NCBIfam" id="TIGR00033">
    <property type="entry name" value="aroC"/>
    <property type="match status" value="1"/>
</dbReference>
<dbReference type="NCBIfam" id="NF003793">
    <property type="entry name" value="PRK05382.1"/>
    <property type="match status" value="1"/>
</dbReference>
<dbReference type="PANTHER" id="PTHR21085">
    <property type="entry name" value="CHORISMATE SYNTHASE"/>
    <property type="match status" value="1"/>
</dbReference>
<dbReference type="PANTHER" id="PTHR21085:SF0">
    <property type="entry name" value="CHORISMATE SYNTHASE"/>
    <property type="match status" value="1"/>
</dbReference>
<dbReference type="Pfam" id="PF01264">
    <property type="entry name" value="Chorismate_synt"/>
    <property type="match status" value="1"/>
</dbReference>
<dbReference type="PIRSF" id="PIRSF001456">
    <property type="entry name" value="Chorismate_synth"/>
    <property type="match status" value="1"/>
</dbReference>
<dbReference type="SUPFAM" id="SSF103263">
    <property type="entry name" value="Chorismate synthase, AroC"/>
    <property type="match status" value="1"/>
</dbReference>
<dbReference type="PROSITE" id="PS00787">
    <property type="entry name" value="CHORISMATE_SYNTHASE_1"/>
    <property type="match status" value="1"/>
</dbReference>
<dbReference type="PROSITE" id="PS00788">
    <property type="entry name" value="CHORISMATE_SYNTHASE_2"/>
    <property type="match status" value="1"/>
</dbReference>
<dbReference type="PROSITE" id="PS00789">
    <property type="entry name" value="CHORISMATE_SYNTHASE_3"/>
    <property type="match status" value="1"/>
</dbReference>
<organism>
    <name type="scientific">Bartonella henselae (strain ATCC 49882 / DSM 28221 / CCUG 30454 / Houston 1)</name>
    <name type="common">Rochalimaea henselae</name>
    <dbReference type="NCBI Taxonomy" id="283166"/>
    <lineage>
        <taxon>Bacteria</taxon>
        <taxon>Pseudomonadati</taxon>
        <taxon>Pseudomonadota</taxon>
        <taxon>Alphaproteobacteria</taxon>
        <taxon>Hyphomicrobiales</taxon>
        <taxon>Bartonellaceae</taxon>
        <taxon>Bartonella</taxon>
    </lineage>
</organism>
<accession>Q6G4D4</accession>